<dbReference type="EC" id="3.6.4.13" evidence="1"/>
<dbReference type="EMBL" id="AE014296">
    <property type="status" value="NOT_ANNOTATED_CDS"/>
    <property type="molecule type" value="Genomic_DNA"/>
</dbReference>
<dbReference type="EMBL" id="AF005239">
    <property type="protein sequence ID" value="AAC23709.1"/>
    <property type="molecule type" value="mRNA"/>
</dbReference>
<dbReference type="SMR" id="O61305"/>
<dbReference type="FunCoup" id="O61305">
    <property type="interactions" value="1292"/>
</dbReference>
<dbReference type="STRING" id="7227.FBpp0304166"/>
<dbReference type="iPTMnet" id="O61305"/>
<dbReference type="PaxDb" id="7227-FBpp0304166"/>
<dbReference type="AGR" id="FB:FBgn0024804"/>
<dbReference type="FlyBase" id="FBgn0024804">
    <property type="gene designation" value="Dbp80"/>
</dbReference>
<dbReference type="VEuPathDB" id="VectorBase:FBgn0024804"/>
<dbReference type="eggNOG" id="KOG0332">
    <property type="taxonomic scope" value="Eukaryota"/>
</dbReference>
<dbReference type="InParanoid" id="O61305"/>
<dbReference type="OrthoDB" id="10265785at2759"/>
<dbReference type="PhylomeDB" id="O61305"/>
<dbReference type="ChiTaRS" id="Dbp80">
    <property type="organism name" value="fly"/>
</dbReference>
<dbReference type="PRO" id="PR:O61305"/>
<dbReference type="Proteomes" id="UP000000803">
    <property type="component" value="Chromosome 3L"/>
</dbReference>
<dbReference type="ExpressionAtlas" id="O61305">
    <property type="expression patterns" value="baseline and differential"/>
</dbReference>
<dbReference type="GO" id="GO:0010494">
    <property type="term" value="C:cytoplasmic stress granule"/>
    <property type="evidence" value="ECO:0000318"/>
    <property type="project" value="GO_Central"/>
</dbReference>
<dbReference type="GO" id="GO:0044614">
    <property type="term" value="C:nuclear pore cytoplasmic filaments"/>
    <property type="evidence" value="ECO:0000250"/>
    <property type="project" value="FlyBase"/>
</dbReference>
<dbReference type="GO" id="GO:0005654">
    <property type="term" value="C:nucleoplasm"/>
    <property type="evidence" value="ECO:0007669"/>
    <property type="project" value="UniProtKB-SubCell"/>
</dbReference>
<dbReference type="GO" id="GO:0005634">
    <property type="term" value="C:nucleus"/>
    <property type="evidence" value="ECO:0000318"/>
    <property type="project" value="GO_Central"/>
</dbReference>
<dbReference type="GO" id="GO:0005524">
    <property type="term" value="F:ATP binding"/>
    <property type="evidence" value="ECO:0007669"/>
    <property type="project" value="UniProtKB-KW"/>
</dbReference>
<dbReference type="GO" id="GO:0016887">
    <property type="term" value="F:ATP hydrolysis activity"/>
    <property type="evidence" value="ECO:0007669"/>
    <property type="project" value="RHEA"/>
</dbReference>
<dbReference type="GO" id="GO:0003729">
    <property type="term" value="F:mRNA binding"/>
    <property type="evidence" value="ECO:0000318"/>
    <property type="project" value="GO_Central"/>
</dbReference>
<dbReference type="GO" id="GO:0003724">
    <property type="term" value="F:RNA helicase activity"/>
    <property type="evidence" value="ECO:0000318"/>
    <property type="project" value="GO_Central"/>
</dbReference>
<dbReference type="GO" id="GO:0016973">
    <property type="term" value="P:poly(A)+ mRNA export from nucleus"/>
    <property type="evidence" value="ECO:0000318"/>
    <property type="project" value="GO_Central"/>
</dbReference>
<dbReference type="GO" id="GO:0010468">
    <property type="term" value="P:regulation of gene expression"/>
    <property type="evidence" value="ECO:0007669"/>
    <property type="project" value="UniProtKB-ARBA"/>
</dbReference>
<dbReference type="CDD" id="cd17963">
    <property type="entry name" value="DEADc_DDX19_DDX25"/>
    <property type="match status" value="1"/>
</dbReference>
<dbReference type="CDD" id="cd18787">
    <property type="entry name" value="SF2_C_DEAD"/>
    <property type="match status" value="1"/>
</dbReference>
<dbReference type="FunFam" id="3.40.50.300:FF:000849">
    <property type="entry name" value="ATP-dependent RNA helicase DBP5"/>
    <property type="match status" value="1"/>
</dbReference>
<dbReference type="FunFam" id="3.40.50.300:FF:000318">
    <property type="entry name" value="ATP-dependent RNA helicase DDX19B"/>
    <property type="match status" value="1"/>
</dbReference>
<dbReference type="Gene3D" id="3.40.50.300">
    <property type="entry name" value="P-loop containing nucleotide triphosphate hydrolases"/>
    <property type="match status" value="2"/>
</dbReference>
<dbReference type="InterPro" id="IPR011545">
    <property type="entry name" value="DEAD/DEAH_box_helicase_dom"/>
</dbReference>
<dbReference type="InterPro" id="IPR014001">
    <property type="entry name" value="Helicase_ATP-bd"/>
</dbReference>
<dbReference type="InterPro" id="IPR001650">
    <property type="entry name" value="Helicase_C-like"/>
</dbReference>
<dbReference type="InterPro" id="IPR027417">
    <property type="entry name" value="P-loop_NTPase"/>
</dbReference>
<dbReference type="InterPro" id="IPR014014">
    <property type="entry name" value="RNA_helicase_DEAD_Q_motif"/>
</dbReference>
<dbReference type="PANTHER" id="PTHR47958">
    <property type="entry name" value="ATP-DEPENDENT RNA HELICASE DBP3"/>
    <property type="match status" value="1"/>
</dbReference>
<dbReference type="Pfam" id="PF00270">
    <property type="entry name" value="DEAD"/>
    <property type="match status" value="1"/>
</dbReference>
<dbReference type="Pfam" id="PF00271">
    <property type="entry name" value="Helicase_C"/>
    <property type="match status" value="1"/>
</dbReference>
<dbReference type="SMART" id="SM00487">
    <property type="entry name" value="DEXDc"/>
    <property type="match status" value="1"/>
</dbReference>
<dbReference type="SMART" id="SM00490">
    <property type="entry name" value="HELICc"/>
    <property type="match status" value="1"/>
</dbReference>
<dbReference type="SUPFAM" id="SSF52540">
    <property type="entry name" value="P-loop containing nucleoside triphosphate hydrolases"/>
    <property type="match status" value="1"/>
</dbReference>
<dbReference type="PROSITE" id="PS51192">
    <property type="entry name" value="HELICASE_ATP_BIND_1"/>
    <property type="match status" value="1"/>
</dbReference>
<dbReference type="PROSITE" id="PS51194">
    <property type="entry name" value="HELICASE_CTER"/>
    <property type="match status" value="1"/>
</dbReference>
<dbReference type="PROSITE" id="PS51195">
    <property type="entry name" value="Q_MOTIF"/>
    <property type="match status" value="1"/>
</dbReference>
<feature type="chain" id="PRO_0000055024" description="DEAD-box helicase Dbp80">
    <location>
        <begin position="1"/>
        <end position="460"/>
    </location>
</feature>
<feature type="domain" description="Helicase ATP-binding" evidence="2">
    <location>
        <begin position="106"/>
        <end position="276"/>
    </location>
</feature>
<feature type="domain" description="Helicase C-terminal" evidence="3">
    <location>
        <begin position="287"/>
        <end position="455"/>
    </location>
</feature>
<feature type="short sequence motif" description="Q motif">
    <location>
        <begin position="73"/>
        <end position="101"/>
    </location>
</feature>
<feature type="short sequence motif" description="DEAD box">
    <location>
        <begin position="223"/>
        <end position="226"/>
    </location>
</feature>
<feature type="binding site" evidence="2">
    <location>
        <begin position="119"/>
        <end position="126"/>
    </location>
    <ligand>
        <name>ATP</name>
        <dbReference type="ChEBI" id="CHEBI:30616"/>
    </ligand>
</feature>
<feature type="modified residue" description="Phosphoserine" evidence="4">
    <location>
        <position position="26"/>
    </location>
</feature>
<feature type="modified residue" description="Phosphothreonine" evidence="4 5">
    <location>
        <position position="30"/>
    </location>
</feature>
<gene>
    <name type="primary">Dbp80</name>
    <name type="synonym">Hel40</name>
    <name type="synonym">HEL80</name>
    <name type="ORF">CG17023</name>
</gene>
<protein>
    <recommendedName>
        <fullName>DEAD-box helicase Dbp80</fullName>
        <ecNumber evidence="1">3.6.4.13</ecNumber>
    </recommendedName>
</protein>
<accession>O61305</accession>
<organism>
    <name type="scientific">Drosophila melanogaster</name>
    <name type="common">Fruit fly</name>
    <dbReference type="NCBI Taxonomy" id="7227"/>
    <lineage>
        <taxon>Eukaryota</taxon>
        <taxon>Metazoa</taxon>
        <taxon>Ecdysozoa</taxon>
        <taxon>Arthropoda</taxon>
        <taxon>Hexapoda</taxon>
        <taxon>Insecta</taxon>
        <taxon>Pterygota</taxon>
        <taxon>Neoptera</taxon>
        <taxon>Endopterygota</taxon>
        <taxon>Diptera</taxon>
        <taxon>Brachycera</taxon>
        <taxon>Muscomorpha</taxon>
        <taxon>Ephydroidea</taxon>
        <taxon>Drosophilidae</taxon>
        <taxon>Drosophila</taxon>
        <taxon>Sophophora</taxon>
    </lineage>
</organism>
<evidence type="ECO:0000250" key="1">
    <source>
        <dbReference type="UniProtKB" id="Q9UMR2"/>
    </source>
</evidence>
<evidence type="ECO:0000255" key="2">
    <source>
        <dbReference type="PROSITE-ProRule" id="PRU00541"/>
    </source>
</evidence>
<evidence type="ECO:0000255" key="3">
    <source>
        <dbReference type="PROSITE-ProRule" id="PRU00542"/>
    </source>
</evidence>
<evidence type="ECO:0000269" key="4">
    <source>
    </source>
</evidence>
<evidence type="ECO:0000269" key="5">
    <source>
    </source>
</evidence>
<evidence type="ECO:0000305" key="6"/>
<reference key="1">
    <citation type="journal article" date="1998" name="Biochim. Biophys. Acta">
        <title>A novel DEAD-box RNA helicase exhibits high sequence conservation from yeast to humans.</title>
        <authorList>
            <person name="Eisen A."/>
            <person name="Sattah M."/>
            <person name="Gazitt T."/>
            <person name="Neal K."/>
            <person name="Szauter P."/>
            <person name="Lucchesi J."/>
        </authorList>
    </citation>
    <scope>NUCLEOTIDE SEQUENCE [MRNA]</scope>
</reference>
<reference key="2">
    <citation type="journal article" date="2000" name="Science">
        <title>The genome sequence of Drosophila melanogaster.</title>
        <authorList>
            <person name="Adams M.D."/>
            <person name="Celniker S.E."/>
            <person name="Holt R.A."/>
            <person name="Evans C.A."/>
            <person name="Gocayne J.D."/>
            <person name="Amanatides P.G."/>
            <person name="Scherer S.E."/>
            <person name="Li P.W."/>
            <person name="Hoskins R.A."/>
            <person name="Galle R.F."/>
            <person name="George R.A."/>
            <person name="Lewis S.E."/>
            <person name="Richards S."/>
            <person name="Ashburner M."/>
            <person name="Henderson S.N."/>
            <person name="Sutton G.G."/>
            <person name="Wortman J.R."/>
            <person name="Yandell M.D."/>
            <person name="Zhang Q."/>
            <person name="Chen L.X."/>
            <person name="Brandon R.C."/>
            <person name="Rogers Y.-H.C."/>
            <person name="Blazej R.G."/>
            <person name="Champe M."/>
            <person name="Pfeiffer B.D."/>
            <person name="Wan K.H."/>
            <person name="Doyle C."/>
            <person name="Baxter E.G."/>
            <person name="Helt G."/>
            <person name="Nelson C.R."/>
            <person name="Miklos G.L.G."/>
            <person name="Abril J.F."/>
            <person name="Agbayani A."/>
            <person name="An H.-J."/>
            <person name="Andrews-Pfannkoch C."/>
            <person name="Baldwin D."/>
            <person name="Ballew R.M."/>
            <person name="Basu A."/>
            <person name="Baxendale J."/>
            <person name="Bayraktaroglu L."/>
            <person name="Beasley E.M."/>
            <person name="Beeson K.Y."/>
            <person name="Benos P.V."/>
            <person name="Berman B.P."/>
            <person name="Bhandari D."/>
            <person name="Bolshakov S."/>
            <person name="Borkova D."/>
            <person name="Botchan M.R."/>
            <person name="Bouck J."/>
            <person name="Brokstein P."/>
            <person name="Brottier P."/>
            <person name="Burtis K.C."/>
            <person name="Busam D.A."/>
            <person name="Butler H."/>
            <person name="Cadieu E."/>
            <person name="Center A."/>
            <person name="Chandra I."/>
            <person name="Cherry J.M."/>
            <person name="Cawley S."/>
            <person name="Dahlke C."/>
            <person name="Davenport L.B."/>
            <person name="Davies P."/>
            <person name="de Pablos B."/>
            <person name="Delcher A."/>
            <person name="Deng Z."/>
            <person name="Mays A.D."/>
            <person name="Dew I."/>
            <person name="Dietz S.M."/>
            <person name="Dodson K."/>
            <person name="Doup L.E."/>
            <person name="Downes M."/>
            <person name="Dugan-Rocha S."/>
            <person name="Dunkov B.C."/>
            <person name="Dunn P."/>
            <person name="Durbin K.J."/>
            <person name="Evangelista C.C."/>
            <person name="Ferraz C."/>
            <person name="Ferriera S."/>
            <person name="Fleischmann W."/>
            <person name="Fosler C."/>
            <person name="Gabrielian A.E."/>
            <person name="Garg N.S."/>
            <person name="Gelbart W.M."/>
            <person name="Glasser K."/>
            <person name="Glodek A."/>
            <person name="Gong F."/>
            <person name="Gorrell J.H."/>
            <person name="Gu Z."/>
            <person name="Guan P."/>
            <person name="Harris M."/>
            <person name="Harris N.L."/>
            <person name="Harvey D.A."/>
            <person name="Heiman T.J."/>
            <person name="Hernandez J.R."/>
            <person name="Houck J."/>
            <person name="Hostin D."/>
            <person name="Houston K.A."/>
            <person name="Howland T.J."/>
            <person name="Wei M.-H."/>
            <person name="Ibegwam C."/>
            <person name="Jalali M."/>
            <person name="Kalush F."/>
            <person name="Karpen G.H."/>
            <person name="Ke Z."/>
            <person name="Kennison J.A."/>
            <person name="Ketchum K.A."/>
            <person name="Kimmel B.E."/>
            <person name="Kodira C.D."/>
            <person name="Kraft C.L."/>
            <person name="Kravitz S."/>
            <person name="Kulp D."/>
            <person name="Lai Z."/>
            <person name="Lasko P."/>
            <person name="Lei Y."/>
            <person name="Levitsky A.A."/>
            <person name="Li J.H."/>
            <person name="Li Z."/>
            <person name="Liang Y."/>
            <person name="Lin X."/>
            <person name="Liu X."/>
            <person name="Mattei B."/>
            <person name="McIntosh T.C."/>
            <person name="McLeod M.P."/>
            <person name="McPherson D."/>
            <person name="Merkulov G."/>
            <person name="Milshina N.V."/>
            <person name="Mobarry C."/>
            <person name="Morris J."/>
            <person name="Moshrefi A."/>
            <person name="Mount S.M."/>
            <person name="Moy M."/>
            <person name="Murphy B."/>
            <person name="Murphy L."/>
            <person name="Muzny D.M."/>
            <person name="Nelson D.L."/>
            <person name="Nelson D.R."/>
            <person name="Nelson K.A."/>
            <person name="Nixon K."/>
            <person name="Nusskern D.R."/>
            <person name="Pacleb J.M."/>
            <person name="Palazzolo M."/>
            <person name="Pittman G.S."/>
            <person name="Pan S."/>
            <person name="Pollard J."/>
            <person name="Puri V."/>
            <person name="Reese M.G."/>
            <person name="Reinert K."/>
            <person name="Remington K."/>
            <person name="Saunders R.D.C."/>
            <person name="Scheeler F."/>
            <person name="Shen H."/>
            <person name="Shue B.C."/>
            <person name="Siden-Kiamos I."/>
            <person name="Simpson M."/>
            <person name="Skupski M.P."/>
            <person name="Smith T.J."/>
            <person name="Spier E."/>
            <person name="Spradling A.C."/>
            <person name="Stapleton M."/>
            <person name="Strong R."/>
            <person name="Sun E."/>
            <person name="Svirskas R."/>
            <person name="Tector C."/>
            <person name="Turner R."/>
            <person name="Venter E."/>
            <person name="Wang A.H."/>
            <person name="Wang X."/>
            <person name="Wang Z.-Y."/>
            <person name="Wassarman D.A."/>
            <person name="Weinstock G.M."/>
            <person name="Weissenbach J."/>
            <person name="Williams S.M."/>
            <person name="Woodage T."/>
            <person name="Worley K.C."/>
            <person name="Wu D."/>
            <person name="Yang S."/>
            <person name="Yao Q.A."/>
            <person name="Ye J."/>
            <person name="Yeh R.-F."/>
            <person name="Zaveri J.S."/>
            <person name="Zhan M."/>
            <person name="Zhang G."/>
            <person name="Zhao Q."/>
            <person name="Zheng L."/>
            <person name="Zheng X.H."/>
            <person name="Zhong F.N."/>
            <person name="Zhong W."/>
            <person name="Zhou X."/>
            <person name="Zhu S.C."/>
            <person name="Zhu X."/>
            <person name="Smith H.O."/>
            <person name="Gibbs R.A."/>
            <person name="Myers E.W."/>
            <person name="Rubin G.M."/>
            <person name="Venter J.C."/>
        </authorList>
    </citation>
    <scope>NUCLEOTIDE SEQUENCE [LARGE SCALE GENOMIC DNA]</scope>
    <source>
        <strain>Berkeley</strain>
    </source>
</reference>
<reference key="3">
    <citation type="journal article" date="2002" name="Genome Biol.">
        <title>Annotation of the Drosophila melanogaster euchromatic genome: a systematic review.</title>
        <authorList>
            <person name="Misra S."/>
            <person name="Crosby M.A."/>
            <person name="Mungall C.J."/>
            <person name="Matthews B.B."/>
            <person name="Campbell K.S."/>
            <person name="Hradecky P."/>
            <person name="Huang Y."/>
            <person name="Kaminker J.S."/>
            <person name="Millburn G.H."/>
            <person name="Prochnik S.E."/>
            <person name="Smith C.D."/>
            <person name="Tupy J.L."/>
            <person name="Whitfield E.J."/>
            <person name="Bayraktaroglu L."/>
            <person name="Berman B.P."/>
            <person name="Bettencourt B.R."/>
            <person name="Celniker S.E."/>
            <person name="de Grey A.D.N.J."/>
            <person name="Drysdale R.A."/>
            <person name="Harris N.L."/>
            <person name="Richter J."/>
            <person name="Russo S."/>
            <person name="Schroeder A.J."/>
            <person name="Shu S.Q."/>
            <person name="Stapleton M."/>
            <person name="Yamada C."/>
            <person name="Ashburner M."/>
            <person name="Gelbart W.M."/>
            <person name="Rubin G.M."/>
            <person name="Lewis S.E."/>
        </authorList>
    </citation>
    <scope>GENOME REANNOTATION</scope>
    <source>
        <strain>Berkeley</strain>
    </source>
</reference>
<reference key="4">
    <citation type="journal article" date="2007" name="Mol. Biosyst.">
        <title>An integrated chemical, mass spectrometric and computational strategy for (quantitative) phosphoproteomics: application to Drosophila melanogaster Kc167 cells.</title>
        <authorList>
            <person name="Bodenmiller B."/>
            <person name="Mueller L.N."/>
            <person name="Pedrioli P.G.A."/>
            <person name="Pflieger D."/>
            <person name="Juenger M.A."/>
            <person name="Eng J.K."/>
            <person name="Aebersold R."/>
            <person name="Tao W.A."/>
        </authorList>
    </citation>
    <scope>PHOSPHORYLATION [LARGE SCALE ANALYSIS] AT SER-26 AND THR-30</scope>
    <scope>IDENTIFICATION BY MASS SPECTROMETRY</scope>
</reference>
<reference key="5">
    <citation type="journal article" date="2008" name="J. Proteome Res.">
        <title>Phosphoproteome analysis of Drosophila melanogaster embryos.</title>
        <authorList>
            <person name="Zhai B."/>
            <person name="Villen J."/>
            <person name="Beausoleil S.A."/>
            <person name="Mintseris J."/>
            <person name="Gygi S.P."/>
        </authorList>
    </citation>
    <scope>PHOSPHORYLATION [LARGE SCALE ANALYSIS] AT THR-30</scope>
    <scope>IDENTIFICATION BY MASS SPECTROMETRY</scope>
    <source>
        <tissue>Embryo</tissue>
    </source>
</reference>
<keyword id="KW-0067">ATP-binding</keyword>
<keyword id="KW-0963">Cytoplasm</keyword>
<keyword id="KW-0347">Helicase</keyword>
<keyword id="KW-0378">Hydrolase</keyword>
<keyword id="KW-0547">Nucleotide-binding</keyword>
<keyword id="KW-0539">Nucleus</keyword>
<keyword id="KW-0597">Phosphoprotein</keyword>
<keyword id="KW-1185">Reference proteome</keyword>
<keyword id="KW-0694">RNA-binding</keyword>
<sequence>MGDWAKKSEDQEVSKLVDKLNLDSKSGEETDFDVADPAETSLLIKILGKGLVNTKLSLDLQQKNPNSPLHSVKTFEALHLKASLLKGIYAMGFNTPSKIQETALPTLLADPPQNMIAQSQSGTGKTAAFVLAMLSRVNVCLNHPQVLCLSPTYELAIQTGEVAARMGQFCREIKLRFAVRGEEVDRSKKIEEHILIGTPGKLLDWGIKFRLFDMKKISVFVLDEADVMIATQGHHDQCIRIHKMLNPHCQMLFFSATYGKEVMDFARLIVADPTIIRLMREEESLENIKQYYVKCKNEEGKYNAIQNIYGCISVGQAIIFCHTKRTAAWLAAKMTSDGHSVAVLTGDLTVVQRLDVLDRFRSGLEKVLITTNILSRGIDIEQLQVVVNFDLPVDLDGMADCETYLHRIGRTGRFGKSGIAINLITDEKTMKVCSDIEKHFNKKIEVLNTDSADDIEKIGT</sequence>
<proteinExistence type="evidence at protein level"/>
<name>DDX19_DROME</name>
<comment type="function">
    <text evidence="1">ATP-dependent RNA helicase involved in mRNA export from the nucleus.</text>
</comment>
<comment type="catalytic activity">
    <reaction evidence="1">
        <text>ATP + H2O = ADP + phosphate + H(+)</text>
        <dbReference type="Rhea" id="RHEA:13065"/>
        <dbReference type="ChEBI" id="CHEBI:15377"/>
        <dbReference type="ChEBI" id="CHEBI:15378"/>
        <dbReference type="ChEBI" id="CHEBI:30616"/>
        <dbReference type="ChEBI" id="CHEBI:43474"/>
        <dbReference type="ChEBI" id="CHEBI:456216"/>
        <dbReference type="EC" id="3.6.4.13"/>
    </reaction>
</comment>
<comment type="subcellular location">
    <subcellularLocation>
        <location evidence="1">Cytoplasm</location>
    </subcellularLocation>
    <subcellularLocation>
        <location evidence="1">Nucleus</location>
        <location evidence="1">Nucleoplasm</location>
    </subcellularLocation>
    <text evidence="1">Associates with the nuclear pore complex cytoplasmic fibrils.</text>
</comment>
<comment type="similarity">
    <text evidence="6">Belongs to the DEAD box helicase family. DDX19/DBP5 subfamily.</text>
</comment>